<name>IF1_BURM9</name>
<feature type="chain" id="PRO_0000338780" description="Translation initiation factor IF-1">
    <location>
        <begin position="1"/>
        <end position="72"/>
    </location>
</feature>
<feature type="domain" description="S1-like" evidence="1">
    <location>
        <begin position="1"/>
        <end position="72"/>
    </location>
</feature>
<comment type="function">
    <text evidence="1">One of the essential components for the initiation of protein synthesis. Stabilizes the binding of IF-2 and IF-3 on the 30S subunit to which N-formylmethionyl-tRNA(fMet) subsequently binds. Helps modulate mRNA selection, yielding the 30S pre-initiation complex (PIC). Upon addition of the 50S ribosomal subunit IF-1, IF-2 and IF-3 are released leaving the mature 70S translation initiation complex.</text>
</comment>
<comment type="subunit">
    <text evidence="1">Component of the 30S ribosomal translation pre-initiation complex which assembles on the 30S ribosome in the order IF-2 and IF-3, IF-1 and N-formylmethionyl-tRNA(fMet); mRNA recruitment can occur at any time during PIC assembly.</text>
</comment>
<comment type="subcellular location">
    <subcellularLocation>
        <location evidence="1">Cytoplasm</location>
    </subcellularLocation>
</comment>
<comment type="similarity">
    <text evidence="1">Belongs to the IF-1 family.</text>
</comment>
<organism>
    <name type="scientific">Burkholderia mallei (strain NCTC 10229)</name>
    <dbReference type="NCBI Taxonomy" id="412022"/>
    <lineage>
        <taxon>Bacteria</taxon>
        <taxon>Pseudomonadati</taxon>
        <taxon>Pseudomonadota</taxon>
        <taxon>Betaproteobacteria</taxon>
        <taxon>Burkholderiales</taxon>
        <taxon>Burkholderiaceae</taxon>
        <taxon>Burkholderia</taxon>
        <taxon>pseudomallei group</taxon>
    </lineage>
</organism>
<protein>
    <recommendedName>
        <fullName evidence="1">Translation initiation factor IF-1</fullName>
    </recommendedName>
</protein>
<keyword id="KW-0963">Cytoplasm</keyword>
<keyword id="KW-0396">Initiation factor</keyword>
<keyword id="KW-0648">Protein biosynthesis</keyword>
<keyword id="KW-0694">RNA-binding</keyword>
<keyword id="KW-0699">rRNA-binding</keyword>
<evidence type="ECO:0000255" key="1">
    <source>
        <dbReference type="HAMAP-Rule" id="MF_00075"/>
    </source>
</evidence>
<accession>A2S7J7</accession>
<dbReference type="EMBL" id="CP000546">
    <property type="protein sequence ID" value="ABN00851.1"/>
    <property type="molecule type" value="Genomic_DNA"/>
</dbReference>
<dbReference type="RefSeq" id="WP_004185257.1">
    <property type="nucleotide sequence ID" value="NC_008836.1"/>
</dbReference>
<dbReference type="BMRB" id="A2S7J7"/>
<dbReference type="SMR" id="A2S7J7"/>
<dbReference type="GeneID" id="92980298"/>
<dbReference type="KEGG" id="bml:BMA10229_A1945"/>
<dbReference type="HOGENOM" id="CLU_151267_1_0_4"/>
<dbReference type="Proteomes" id="UP000002283">
    <property type="component" value="Chromosome I"/>
</dbReference>
<dbReference type="GO" id="GO:0005829">
    <property type="term" value="C:cytosol"/>
    <property type="evidence" value="ECO:0007669"/>
    <property type="project" value="TreeGrafter"/>
</dbReference>
<dbReference type="GO" id="GO:0043022">
    <property type="term" value="F:ribosome binding"/>
    <property type="evidence" value="ECO:0007669"/>
    <property type="project" value="UniProtKB-UniRule"/>
</dbReference>
<dbReference type="GO" id="GO:0019843">
    <property type="term" value="F:rRNA binding"/>
    <property type="evidence" value="ECO:0007669"/>
    <property type="project" value="UniProtKB-UniRule"/>
</dbReference>
<dbReference type="GO" id="GO:0003743">
    <property type="term" value="F:translation initiation factor activity"/>
    <property type="evidence" value="ECO:0007669"/>
    <property type="project" value="UniProtKB-UniRule"/>
</dbReference>
<dbReference type="CDD" id="cd04451">
    <property type="entry name" value="S1_IF1"/>
    <property type="match status" value="1"/>
</dbReference>
<dbReference type="FunFam" id="2.40.50.140:FF:000002">
    <property type="entry name" value="Translation initiation factor IF-1"/>
    <property type="match status" value="1"/>
</dbReference>
<dbReference type="Gene3D" id="2.40.50.140">
    <property type="entry name" value="Nucleic acid-binding proteins"/>
    <property type="match status" value="1"/>
</dbReference>
<dbReference type="HAMAP" id="MF_00075">
    <property type="entry name" value="IF_1"/>
    <property type="match status" value="1"/>
</dbReference>
<dbReference type="InterPro" id="IPR012340">
    <property type="entry name" value="NA-bd_OB-fold"/>
</dbReference>
<dbReference type="InterPro" id="IPR006196">
    <property type="entry name" value="RNA-binding_domain_S1_IF1"/>
</dbReference>
<dbReference type="InterPro" id="IPR003029">
    <property type="entry name" value="S1_domain"/>
</dbReference>
<dbReference type="InterPro" id="IPR004368">
    <property type="entry name" value="TIF_IF1"/>
</dbReference>
<dbReference type="NCBIfam" id="TIGR00008">
    <property type="entry name" value="infA"/>
    <property type="match status" value="1"/>
</dbReference>
<dbReference type="PANTHER" id="PTHR33370">
    <property type="entry name" value="TRANSLATION INITIATION FACTOR IF-1, CHLOROPLASTIC"/>
    <property type="match status" value="1"/>
</dbReference>
<dbReference type="PANTHER" id="PTHR33370:SF1">
    <property type="entry name" value="TRANSLATION INITIATION FACTOR IF-1, CHLOROPLASTIC"/>
    <property type="match status" value="1"/>
</dbReference>
<dbReference type="Pfam" id="PF01176">
    <property type="entry name" value="eIF-1a"/>
    <property type="match status" value="1"/>
</dbReference>
<dbReference type="SMART" id="SM00316">
    <property type="entry name" value="S1"/>
    <property type="match status" value="1"/>
</dbReference>
<dbReference type="SUPFAM" id="SSF50249">
    <property type="entry name" value="Nucleic acid-binding proteins"/>
    <property type="match status" value="1"/>
</dbReference>
<dbReference type="PROSITE" id="PS50832">
    <property type="entry name" value="S1_IF1_TYPE"/>
    <property type="match status" value="1"/>
</dbReference>
<proteinExistence type="inferred from homology"/>
<gene>
    <name evidence="1" type="primary">infA</name>
    <name type="ordered locus">BMA10229_A1945</name>
</gene>
<reference key="1">
    <citation type="journal article" date="2010" name="Genome Biol. Evol.">
        <title>Continuing evolution of Burkholderia mallei through genome reduction and large-scale rearrangements.</title>
        <authorList>
            <person name="Losada L."/>
            <person name="Ronning C.M."/>
            <person name="DeShazer D."/>
            <person name="Woods D."/>
            <person name="Fedorova N."/>
            <person name="Kim H.S."/>
            <person name="Shabalina S.A."/>
            <person name="Pearson T.R."/>
            <person name="Brinkac L."/>
            <person name="Tan P."/>
            <person name="Nandi T."/>
            <person name="Crabtree J."/>
            <person name="Badger J."/>
            <person name="Beckstrom-Sternberg S."/>
            <person name="Saqib M."/>
            <person name="Schutzer S.E."/>
            <person name="Keim P."/>
            <person name="Nierman W.C."/>
        </authorList>
    </citation>
    <scope>NUCLEOTIDE SEQUENCE [LARGE SCALE GENOMIC DNA]</scope>
    <source>
        <strain>NCTC 10229</strain>
    </source>
</reference>
<sequence>MAKDDVIQMQGEVIENLPNATFRVKLENGHVVLGHISGKMRMHYIRIFPGDKVTVELTPYDLSRARIVFRAK</sequence>